<protein>
    <recommendedName>
        <fullName evidence="6 7">Kunitz-type serine protease inhibitor DrKIn-II</fullName>
    </recommendedName>
    <alternativeName>
        <fullName evidence="7">Daboia russelii Kunitz Inhibitor-II</fullName>
    </alternativeName>
</protein>
<reference key="1">
    <citation type="journal article" date="2012" name="J. Biol. Chem.">
        <title>A novel heparin-dependent inhibitor of activated protein C that potentiates consumptive coagulopathy in Russell's viper envenomation.</title>
        <authorList>
            <person name="Cheng A.C."/>
            <person name="Wu H.L."/>
            <person name="Shi G.Y."/>
            <person name="Tsai I.H."/>
        </authorList>
    </citation>
    <scope>NUCLEOTIDE SEQUENCE [MRNA]</scope>
    <scope>FUNCTION</scope>
    <scope>MASS SPECTROMETRY</scope>
    <scope>SUBCELLULAR LOCATION</scope>
    <source>
        <tissue>Venom</tissue>
        <tissue>Venom gland</tissue>
    </source>
</reference>
<reference key="2">
    <citation type="journal article" date="2014" name="Biochim. Biophys. Acta">
        <title>Functional characterization of a slow and tight-binding inhibitor of plasmin isolated from Russell's viper venom.</title>
        <authorList>
            <person name="Cheng A.C."/>
            <person name="Tsai I.H."/>
        </authorList>
    </citation>
    <scope>FUNCTION</scope>
    <scope>SUBCELLULAR LOCATION</scope>
    <source>
        <tissue>Venom</tissue>
    </source>
</reference>
<organism>
    <name type="scientific">Daboia russelii</name>
    <name type="common">Russel's viper</name>
    <name type="synonym">Vipera russelii</name>
    <dbReference type="NCBI Taxonomy" id="8707"/>
    <lineage>
        <taxon>Eukaryota</taxon>
        <taxon>Metazoa</taxon>
        <taxon>Chordata</taxon>
        <taxon>Craniata</taxon>
        <taxon>Vertebrata</taxon>
        <taxon>Euteleostomi</taxon>
        <taxon>Lepidosauria</taxon>
        <taxon>Squamata</taxon>
        <taxon>Bifurcata</taxon>
        <taxon>Unidentata</taxon>
        <taxon>Episquamata</taxon>
        <taxon>Toxicofera</taxon>
        <taxon>Serpentes</taxon>
        <taxon>Colubroidea</taxon>
        <taxon>Viperidae</taxon>
        <taxon>Viperinae</taxon>
        <taxon>Daboia</taxon>
    </lineage>
</organism>
<comment type="function">
    <text evidence="4 5">Serine protease inhibitor that inhibits plasmin (90%) (Ki=0.19 nM), trypsin (70%), FXIa/F11 (37%) (Ki=6 nM) and FXa/F10 (20%), and prolonges the activated partial thromboplastin time. This antifibrinolytic property has been confirmed by a fibrin plate assay. Shows less antifibrinolytic activity that aprotinin. In vivo, reduces the bleeding time in a murine bleeding model, and prevents the increase of fibrin(ogen) degradation products in coagulation-stimulated mice.</text>
</comment>
<comment type="subcellular location">
    <subcellularLocation>
        <location evidence="4">Secreted</location>
    </subcellularLocation>
</comment>
<comment type="tissue specificity">
    <text evidence="9 10">Expressed by the venom gland.</text>
</comment>
<comment type="mass spectrometry" mass="6940.3" method="MALDI" evidence="4"/>
<comment type="miscellaneous">
    <text evidence="9 10">Negative results: does not inhibit activated protein C (APC), in absence or presence of heparin. This is due to the absence of heparin-binding motifs. Consequently, heparin is unable to enhance the inhibition of activated protein C (APC) by this protein, as it does for DrKIn-I (PubMed:22416129). Does not inhibit tissue plasminogen activator (tPA/PLAT) and urokinase-type plasminogen activator (uPA/PLAU). Does not prolong the prothrombin time (PubMed:23999090).</text>
</comment>
<comment type="similarity">
    <text evidence="8">Belongs to the venom Kunitz-type family.</text>
</comment>
<keyword id="KW-1015">Disulfide bond</keyword>
<keyword id="KW-1199">Hemostasis impairing toxin</keyword>
<keyword id="KW-0646">Protease inhibitor</keyword>
<keyword id="KW-0964">Secreted</keyword>
<keyword id="KW-0722">Serine protease inhibitor</keyword>
<keyword id="KW-0732">Signal</keyword>
<keyword id="KW-0800">Toxin</keyword>
<sequence length="84" mass="9385">MSSGGLLLLLGLLTLWAELTPISGHDRPTFCNLAPESGRCRAHLRRIYYNLESNKCEVFFYGGCGGNDNNFSTWDECRHTCVGK</sequence>
<name>VKTK2_DABRR</name>
<dbReference type="EMBL" id="JN825730">
    <property type="protein sequence ID" value="AFB74192.1"/>
    <property type="molecule type" value="mRNA"/>
</dbReference>
<dbReference type="SMR" id="H6VC06"/>
<dbReference type="GO" id="GO:0005576">
    <property type="term" value="C:extracellular region"/>
    <property type="evidence" value="ECO:0000314"/>
    <property type="project" value="UniProtKB"/>
</dbReference>
<dbReference type="GO" id="GO:0004867">
    <property type="term" value="F:serine-type endopeptidase inhibitor activity"/>
    <property type="evidence" value="ECO:0000314"/>
    <property type="project" value="UniProtKB"/>
</dbReference>
<dbReference type="GO" id="GO:0090729">
    <property type="term" value="F:toxin activity"/>
    <property type="evidence" value="ECO:0000314"/>
    <property type="project" value="UniProtKB"/>
</dbReference>
<dbReference type="GO" id="GO:0140099">
    <property type="term" value="P:venom-mediated suppression of fibrinolysis in another organism"/>
    <property type="evidence" value="ECO:0000314"/>
    <property type="project" value="UniProtKB"/>
</dbReference>
<dbReference type="FunFam" id="4.10.410.10:FF:000021">
    <property type="entry name" value="Serine protease inhibitor, putative"/>
    <property type="match status" value="1"/>
</dbReference>
<dbReference type="Gene3D" id="4.10.410.10">
    <property type="entry name" value="Pancreatic trypsin inhibitor Kunitz domain"/>
    <property type="match status" value="1"/>
</dbReference>
<dbReference type="InterPro" id="IPR002223">
    <property type="entry name" value="Kunitz_BPTI"/>
</dbReference>
<dbReference type="InterPro" id="IPR036880">
    <property type="entry name" value="Kunitz_BPTI_sf"/>
</dbReference>
<dbReference type="InterPro" id="IPR020901">
    <property type="entry name" value="Prtase_inh_Kunz-CS"/>
</dbReference>
<dbReference type="InterPro" id="IPR050098">
    <property type="entry name" value="TFPI/VKTCI-like"/>
</dbReference>
<dbReference type="PANTHER" id="PTHR10083">
    <property type="entry name" value="KUNITZ-TYPE PROTEASE INHIBITOR-RELATED"/>
    <property type="match status" value="1"/>
</dbReference>
<dbReference type="Pfam" id="PF00014">
    <property type="entry name" value="Kunitz_BPTI"/>
    <property type="match status" value="1"/>
</dbReference>
<dbReference type="PRINTS" id="PR00759">
    <property type="entry name" value="BASICPTASE"/>
</dbReference>
<dbReference type="SMART" id="SM00131">
    <property type="entry name" value="KU"/>
    <property type="match status" value="1"/>
</dbReference>
<dbReference type="SUPFAM" id="SSF57362">
    <property type="entry name" value="BPTI-like"/>
    <property type="match status" value="1"/>
</dbReference>
<dbReference type="PROSITE" id="PS00280">
    <property type="entry name" value="BPTI_KUNITZ_1"/>
    <property type="match status" value="1"/>
</dbReference>
<dbReference type="PROSITE" id="PS50279">
    <property type="entry name" value="BPTI_KUNITZ_2"/>
    <property type="match status" value="1"/>
</dbReference>
<evidence type="ECO:0000250" key="1"/>
<evidence type="ECO:0000255" key="2"/>
<evidence type="ECO:0000255" key="3">
    <source>
        <dbReference type="PROSITE-ProRule" id="PRU00031"/>
    </source>
</evidence>
<evidence type="ECO:0000269" key="4">
    <source>
    </source>
</evidence>
<evidence type="ECO:0000269" key="5">
    <source>
    </source>
</evidence>
<evidence type="ECO:0000303" key="6">
    <source>
    </source>
</evidence>
<evidence type="ECO:0000303" key="7">
    <source>
    </source>
</evidence>
<evidence type="ECO:0000305" key="8"/>
<evidence type="ECO:0000305" key="9">
    <source>
    </source>
</evidence>
<evidence type="ECO:0000305" key="10">
    <source>
    </source>
</evidence>
<accession>H6VC06</accession>
<feature type="signal peptide" evidence="2">
    <location>
        <begin position="1"/>
        <end position="24"/>
    </location>
</feature>
<feature type="chain" id="PRO_0000422089" description="Kunitz-type serine protease inhibitor DrKIn-II" evidence="4">
    <location>
        <begin position="25"/>
        <end position="84"/>
    </location>
</feature>
<feature type="domain" description="BPTI/Kunitz inhibitor" evidence="3">
    <location>
        <begin position="31"/>
        <end position="81"/>
    </location>
</feature>
<feature type="site" description="Reactive bond for trypsin" evidence="1">
    <location>
        <begin position="41"/>
        <end position="42"/>
    </location>
</feature>
<feature type="disulfide bond" evidence="3">
    <location>
        <begin position="31"/>
        <end position="81"/>
    </location>
</feature>
<feature type="disulfide bond" evidence="3">
    <location>
        <begin position="40"/>
        <end position="64"/>
    </location>
</feature>
<feature type="disulfide bond" evidence="3">
    <location>
        <begin position="56"/>
        <end position="77"/>
    </location>
</feature>
<proteinExistence type="evidence at protein level"/>